<organism>
    <name type="scientific">Ascaphus truei</name>
    <name type="common">Coastal tailed frog</name>
    <dbReference type="NCBI Taxonomy" id="8439"/>
    <lineage>
        <taxon>Eukaryota</taxon>
        <taxon>Metazoa</taxon>
        <taxon>Chordata</taxon>
        <taxon>Craniata</taxon>
        <taxon>Vertebrata</taxon>
        <taxon>Euteleostomi</taxon>
        <taxon>Amphibia</taxon>
        <taxon>Batrachia</taxon>
        <taxon>Anura</taxon>
        <taxon>Ascaphidae</taxon>
        <taxon>Ascaphus</taxon>
    </lineage>
</organism>
<proteinExistence type="evidence at protein level"/>
<dbReference type="GO" id="GO:0005576">
    <property type="term" value="C:extracellular region"/>
    <property type="evidence" value="ECO:0000314"/>
    <property type="project" value="UniProtKB"/>
</dbReference>
<dbReference type="GO" id="GO:0090729">
    <property type="term" value="F:toxin activity"/>
    <property type="evidence" value="ECO:0007669"/>
    <property type="project" value="UniProtKB-KW"/>
</dbReference>
<dbReference type="GO" id="GO:0097746">
    <property type="term" value="P:blood vessel diameter maintenance"/>
    <property type="evidence" value="ECO:0000314"/>
    <property type="project" value="UniProtKB"/>
</dbReference>
<dbReference type="GO" id="GO:0006952">
    <property type="term" value="P:defense response"/>
    <property type="evidence" value="ECO:0000314"/>
    <property type="project" value="UniProtKB"/>
</dbReference>
<dbReference type="GO" id="GO:0042311">
    <property type="term" value="P:vasodilation"/>
    <property type="evidence" value="ECO:0007669"/>
    <property type="project" value="UniProtKB-KW"/>
</dbReference>
<evidence type="ECO:0000269" key="1">
    <source>
    </source>
</evidence>
<evidence type="ECO:0000305" key="2"/>
<reference evidence="2" key="1">
    <citation type="journal article" date="2005" name="Gen. Comp. Endocrinol.">
        <title>Bradykinin-related peptides and tryptophyllins in the skin secretions of the most primitive extant frog, Ascaphus truei.</title>
        <authorList>
            <person name="Conlon J.M."/>
            <person name="Jouenne T."/>
            <person name="Cosette P."/>
            <person name="Cosquer D."/>
            <person name="Vaudry H."/>
            <person name="Taylor C.K."/>
            <person name="Abel P.W."/>
        </authorList>
    </citation>
    <scope>PROTEIN SEQUENCE</scope>
    <scope>FUNCTION</scope>
    <scope>SUBCELLULAR LOCATION</scope>
    <scope>TISSUE SPECIFICITY</scope>
    <scope>MASS SPECTROMETRY</scope>
    <source>
        <tissue evidence="1">Skin secretion</tissue>
    </source>
</reference>
<accession>P84832</accession>
<comment type="function">
    <text evidence="1">Induces relaxation of mouse trachea that has been precontracted with methacholine. May induce relaxation of arterial smooth muscle. May target bradykinin receptors (BDKRB).</text>
</comment>
<comment type="subcellular location">
    <subcellularLocation>
        <location evidence="1">Secreted</location>
    </subcellularLocation>
</comment>
<comment type="tissue specificity">
    <text evidence="1">Expressed by the skin glands.</text>
</comment>
<comment type="mass spectrometry"/>
<comment type="similarity">
    <text evidence="2">Belongs to the bradykinin-related peptide family.</text>
</comment>
<name>BRK10_ASCTR</name>
<feature type="peptide" id="PRO_0000233936" description="Bradykinin-like peptide AR-10" evidence="1">
    <location>
        <begin position="1"/>
        <end position="10"/>
    </location>
</feature>
<protein>
    <recommendedName>
        <fullName>Bradykinin-like peptide AR-10</fullName>
    </recommendedName>
</protein>
<sequence>APVPGLSPFR</sequence>
<keyword id="KW-0878">Amphibian defense peptide</keyword>
<keyword id="KW-0903">Direct protein sequencing</keyword>
<keyword id="KW-1213">G-protein coupled receptor impairing toxin</keyword>
<keyword id="KW-0964">Secreted</keyword>
<keyword id="KW-0800">Toxin</keyword>
<keyword id="KW-0838">Vasoactive</keyword>
<keyword id="KW-0840">Vasodilator</keyword>